<comment type="function">
    <text evidence="1">Probable sesquiterpene synthase.</text>
</comment>
<comment type="cofactor">
    <cofactor evidence="1">
        <name>Mg(2+)</name>
        <dbReference type="ChEBI" id="CHEBI:18420"/>
    </cofactor>
    <text evidence="1">Binds 3 Mg(2+) ions per subunit.</text>
</comment>
<comment type="domain">
    <text evidence="1">The Asp-Asp-Xaa-Xaa-Asp/Glu (DDXXD/E) motif is important for the catalytic activity, presumably through binding to Mg(2+).</text>
</comment>
<comment type="miscellaneous">
    <text evidence="3">Does not produce any detectable product when tested in vitro.</text>
</comment>
<comment type="similarity">
    <text evidence="2">Belongs to the terpene synthase family.</text>
</comment>
<gene>
    <name type="primary">TPS4</name>
    <name type="ORF">RCOM_1574410</name>
</gene>
<proteinExistence type="inferred from homology"/>
<accession>B9RHX7</accession>
<feature type="chain" id="PRO_0000422202" description="Probable terpene synthase 4">
    <location>
        <begin position="1"/>
        <end position="563"/>
    </location>
</feature>
<feature type="short sequence motif" description="DDXXD motif">
    <location>
        <begin position="316"/>
        <end position="320"/>
    </location>
</feature>
<feature type="binding site" evidence="1">
    <location>
        <position position="316"/>
    </location>
    <ligand>
        <name>Mg(2+)</name>
        <dbReference type="ChEBI" id="CHEBI:18420"/>
        <label>1</label>
    </ligand>
</feature>
<feature type="binding site" evidence="1">
    <location>
        <position position="316"/>
    </location>
    <ligand>
        <name>Mg(2+)</name>
        <dbReference type="ChEBI" id="CHEBI:18420"/>
        <label>2</label>
    </ligand>
</feature>
<feature type="binding site" evidence="1">
    <location>
        <position position="320"/>
    </location>
    <ligand>
        <name>Mg(2+)</name>
        <dbReference type="ChEBI" id="CHEBI:18420"/>
        <label>1</label>
    </ligand>
</feature>
<feature type="binding site" evidence="1">
    <location>
        <position position="320"/>
    </location>
    <ligand>
        <name>Mg(2+)</name>
        <dbReference type="ChEBI" id="CHEBI:18420"/>
        <label>2</label>
    </ligand>
</feature>
<feature type="binding site" evidence="1">
    <location>
        <position position="469"/>
    </location>
    <ligand>
        <name>Mg(2+)</name>
        <dbReference type="ChEBI" id="CHEBI:18420"/>
        <label>3</label>
    </ligand>
</feature>
<sequence>MANAISNPASFIGVHSPIAQIRIPRLCVAKGMPTPIAQRDIILQDQIQLENTCIRHAKALKEARLAFSKVRKDHSQNLIMIDALQRLGIDYHFQEETQDVLEGQYNKIFAAHQQHHLSDAALRFRLLRQQGYYVPASDVFSELKNREGKFKQELAADIKGLMELYEASQLSIQEENILDEAGAFSAHFLNCWTPHLCDHQTRIVSNTLKHPFHRTLARSTIKNFLHFYNFQGENEYIQTFTELAKLDFNMIQSIHRQEINQVSNWWNNLGLASELKFARDQPEKWCMWPLVGVTDPSLSWQRIELAKPVSLVYLIDDIFDLGGTPDQLTLFTEAVNRWEITATEDLPYHMKICFRALYDVTNQIAYKVYKKHQYNPIHSLKKAWARLCNAFLEEAKWFAAGKLPKADEYLNTAIVTSGVHLVLVHTFFLMGDGITDQTINLLNNDDPGIISSVATILRLWDDLGSAQDENQDGYDGSYIECYMKDFPGTSVRDARNHVISMISDTWKKLNQHCLSPNPFSGSFIRATLNGARMVPLMYDFDSNHNLPILQQNIKSLLFESVAI</sequence>
<organism>
    <name type="scientific">Ricinus communis</name>
    <name type="common">Castor bean</name>
    <dbReference type="NCBI Taxonomy" id="3988"/>
    <lineage>
        <taxon>Eukaryota</taxon>
        <taxon>Viridiplantae</taxon>
        <taxon>Streptophyta</taxon>
        <taxon>Embryophyta</taxon>
        <taxon>Tracheophyta</taxon>
        <taxon>Spermatophyta</taxon>
        <taxon>Magnoliopsida</taxon>
        <taxon>eudicotyledons</taxon>
        <taxon>Gunneridae</taxon>
        <taxon>Pentapetalae</taxon>
        <taxon>rosids</taxon>
        <taxon>fabids</taxon>
        <taxon>Malpighiales</taxon>
        <taxon>Euphorbiaceae</taxon>
        <taxon>Acalyphoideae</taxon>
        <taxon>Acalypheae</taxon>
        <taxon>Ricinus</taxon>
    </lineage>
</organism>
<evidence type="ECO:0000250" key="1"/>
<evidence type="ECO:0000305" key="2"/>
<evidence type="ECO:0000305" key="3">
    <source>
    </source>
</evidence>
<protein>
    <recommendedName>
        <fullName>Probable terpene synthase 4</fullName>
        <shortName>RcSeTPS4</shortName>
        <ecNumber>4.2.3.-</ecNumber>
    </recommendedName>
</protein>
<keyword id="KW-0456">Lyase</keyword>
<keyword id="KW-0460">Magnesium</keyword>
<keyword id="KW-0479">Metal-binding</keyword>
<keyword id="KW-1185">Reference proteome</keyword>
<dbReference type="EC" id="4.2.3.-"/>
<dbReference type="EMBL" id="EQ973781">
    <property type="protein sequence ID" value="EEF48749.1"/>
    <property type="molecule type" value="Genomic_DNA"/>
</dbReference>
<dbReference type="RefSeq" id="XP_002513346.1">
    <property type="nucleotide sequence ID" value="XM_002513300.1"/>
</dbReference>
<dbReference type="SMR" id="B9RHX7"/>
<dbReference type="FunCoup" id="B9RHX7">
    <property type="interactions" value="19"/>
</dbReference>
<dbReference type="STRING" id="3988.B9RHX7"/>
<dbReference type="GeneID" id="8259987"/>
<dbReference type="KEGG" id="rcu:8259987"/>
<dbReference type="eggNOG" id="ENOG502QTGK">
    <property type="taxonomic scope" value="Eukaryota"/>
</dbReference>
<dbReference type="InParanoid" id="B9RHX7"/>
<dbReference type="OrthoDB" id="1921927at2759"/>
<dbReference type="Proteomes" id="UP000008311">
    <property type="component" value="Unassembled WGS sequence"/>
</dbReference>
<dbReference type="GO" id="GO:0000287">
    <property type="term" value="F:magnesium ion binding"/>
    <property type="evidence" value="ECO:0007669"/>
    <property type="project" value="InterPro"/>
</dbReference>
<dbReference type="GO" id="GO:0010333">
    <property type="term" value="F:terpene synthase activity"/>
    <property type="evidence" value="ECO:0007669"/>
    <property type="project" value="InterPro"/>
</dbReference>
<dbReference type="GO" id="GO:0016102">
    <property type="term" value="P:diterpenoid biosynthetic process"/>
    <property type="evidence" value="ECO:0007669"/>
    <property type="project" value="InterPro"/>
</dbReference>
<dbReference type="GO" id="GO:0120251">
    <property type="term" value="P:hydrocarbon biosynthetic process"/>
    <property type="evidence" value="ECO:0007669"/>
    <property type="project" value="UniProtKB-ARBA"/>
</dbReference>
<dbReference type="CDD" id="cd00684">
    <property type="entry name" value="Terpene_cyclase_plant_C1"/>
    <property type="match status" value="1"/>
</dbReference>
<dbReference type="Gene3D" id="1.10.600.10">
    <property type="entry name" value="Farnesyl Diphosphate Synthase"/>
    <property type="match status" value="1"/>
</dbReference>
<dbReference type="Gene3D" id="1.50.10.130">
    <property type="entry name" value="Terpene synthase, N-terminal domain"/>
    <property type="match status" value="1"/>
</dbReference>
<dbReference type="InterPro" id="IPR008949">
    <property type="entry name" value="Isoprenoid_synthase_dom_sf"/>
</dbReference>
<dbReference type="InterPro" id="IPR034741">
    <property type="entry name" value="Terpene_cyclase-like_1_C"/>
</dbReference>
<dbReference type="InterPro" id="IPR044814">
    <property type="entry name" value="Terpene_cyclase_plant_C1"/>
</dbReference>
<dbReference type="InterPro" id="IPR001906">
    <property type="entry name" value="Terpene_synth_N"/>
</dbReference>
<dbReference type="InterPro" id="IPR036965">
    <property type="entry name" value="Terpene_synth_N_sf"/>
</dbReference>
<dbReference type="InterPro" id="IPR050148">
    <property type="entry name" value="Terpene_synthase-like"/>
</dbReference>
<dbReference type="InterPro" id="IPR005630">
    <property type="entry name" value="Terpene_synthase_metal-bd"/>
</dbReference>
<dbReference type="InterPro" id="IPR008930">
    <property type="entry name" value="Terpenoid_cyclase/PrenylTrfase"/>
</dbReference>
<dbReference type="PANTHER" id="PTHR31225">
    <property type="entry name" value="OS04G0344100 PROTEIN-RELATED"/>
    <property type="match status" value="1"/>
</dbReference>
<dbReference type="PANTHER" id="PTHR31225:SF234">
    <property type="entry name" value="TERPENE SYNTHASE 4-RELATED"/>
    <property type="match status" value="1"/>
</dbReference>
<dbReference type="Pfam" id="PF01397">
    <property type="entry name" value="Terpene_synth"/>
    <property type="match status" value="1"/>
</dbReference>
<dbReference type="Pfam" id="PF03936">
    <property type="entry name" value="Terpene_synth_C"/>
    <property type="match status" value="1"/>
</dbReference>
<dbReference type="SFLD" id="SFLDS00005">
    <property type="entry name" value="Isoprenoid_Synthase_Type_I"/>
    <property type="match status" value="1"/>
</dbReference>
<dbReference type="SFLD" id="SFLDG01019">
    <property type="entry name" value="Terpene_Cyclase_Like_1_C_Termi"/>
    <property type="match status" value="1"/>
</dbReference>
<dbReference type="SUPFAM" id="SSF48239">
    <property type="entry name" value="Terpenoid cyclases/Protein prenyltransferases"/>
    <property type="match status" value="1"/>
</dbReference>
<dbReference type="SUPFAM" id="SSF48576">
    <property type="entry name" value="Terpenoid synthases"/>
    <property type="match status" value="1"/>
</dbReference>
<reference key="1">
    <citation type="journal article" date="2010" name="Nat. Biotechnol.">
        <title>Draft genome sequence of the oilseed species Ricinus communis.</title>
        <authorList>
            <person name="Chan A.P."/>
            <person name="Crabtree J."/>
            <person name="Zhao Q."/>
            <person name="Lorenzi H."/>
            <person name="Orvis J."/>
            <person name="Puiu D."/>
            <person name="Melake-Berhan A."/>
            <person name="Jones K.M."/>
            <person name="Redman J."/>
            <person name="Chen G."/>
            <person name="Cahoon E.B."/>
            <person name="Gedil M."/>
            <person name="Stanke M."/>
            <person name="Haas B.J."/>
            <person name="Wortman J.R."/>
            <person name="Fraser-Liggett C.M."/>
            <person name="Ravel J."/>
            <person name="Rabinowicz P.D."/>
        </authorList>
    </citation>
    <scope>NUCLEOTIDE SEQUENCE [LARGE SCALE GENOMIC DNA]</scope>
    <source>
        <strain>cv. Hale</strain>
    </source>
</reference>
<reference key="2">
    <citation type="journal article" date="2012" name="Phytochemistry">
        <title>Functional characterization of four sesquiterpene synthases from Ricinus communis (castor bean).</title>
        <authorList>
            <person name="Xie X."/>
            <person name="Kirby J."/>
            <person name="Keasling J.D."/>
        </authorList>
    </citation>
    <scope>GENE NAME</scope>
</reference>
<name>TPS4_RICCO</name>